<comment type="function">
    <text evidence="1">Mitochondrial GTPase that mediates the disassembly of ribosomes from messenger RNA at the termination of mitochondrial protein biosynthesis. Not involved in the GTP-dependent ribosomal translocation step during translation elongation.</text>
</comment>
<comment type="subcellular location">
    <subcellularLocation>
        <location evidence="1">Mitochondrion</location>
    </subcellularLocation>
</comment>
<comment type="miscellaneous">
    <text evidence="1">This protein may be expected to contain an N-terminal transit peptide but none has been predicted.</text>
</comment>
<comment type="similarity">
    <text evidence="1">Belongs to the TRAFAC class translation factor GTPase superfamily. Classic translation factor GTPase family. EF-G/EF-2 subfamily.</text>
</comment>
<comment type="sequence caution" evidence="2">
    <conflict type="erroneous gene model prediction">
        <sequence resource="EMBL-CDS" id="EED12964"/>
    </conflict>
</comment>
<feature type="chain" id="PRO_0000385621" description="Ribosome-releasing factor 2, mitochondrial">
    <location>
        <begin position="1"/>
        <end position="931"/>
    </location>
</feature>
<feature type="domain" description="tr-type G">
    <location>
        <begin position="63"/>
        <end position="379"/>
    </location>
</feature>
<feature type="binding site" evidence="1">
    <location>
        <begin position="72"/>
        <end position="79"/>
    </location>
    <ligand>
        <name>GTP</name>
        <dbReference type="ChEBI" id="CHEBI:37565"/>
    </ligand>
</feature>
<feature type="binding site" evidence="1">
    <location>
        <begin position="162"/>
        <end position="166"/>
    </location>
    <ligand>
        <name>GTP</name>
        <dbReference type="ChEBI" id="CHEBI:37565"/>
    </ligand>
</feature>
<feature type="binding site" evidence="1">
    <location>
        <begin position="216"/>
        <end position="219"/>
    </location>
    <ligand>
        <name>GTP</name>
        <dbReference type="ChEBI" id="CHEBI:37565"/>
    </ligand>
</feature>
<evidence type="ECO:0000255" key="1">
    <source>
        <dbReference type="HAMAP-Rule" id="MF_03059"/>
    </source>
</evidence>
<evidence type="ECO:0000305" key="2"/>
<protein>
    <recommendedName>
        <fullName evidence="1">Ribosome-releasing factor 2, mitochondrial</fullName>
        <shortName evidence="1">RRF2mt</shortName>
    </recommendedName>
    <alternativeName>
        <fullName evidence="1">Elongation factor G 2, mitochondrial</fullName>
        <shortName evidence="1">EF-G2mt</shortName>
        <shortName evidence="1">mEF-G 2</shortName>
    </alternativeName>
</protein>
<accession>B8MR69</accession>
<dbReference type="EMBL" id="EQ962659">
    <property type="protein sequence ID" value="EED12964.1"/>
    <property type="status" value="ALT_SEQ"/>
    <property type="molecule type" value="Genomic_DNA"/>
</dbReference>
<dbReference type="RefSeq" id="XP_002487075.1">
    <property type="nucleotide sequence ID" value="XM_002487030.1"/>
</dbReference>
<dbReference type="SMR" id="B8MR69"/>
<dbReference type="FunCoup" id="B8MR69">
    <property type="interactions" value="602"/>
</dbReference>
<dbReference type="STRING" id="441959.B8MR69"/>
<dbReference type="GeneID" id="8100481"/>
<dbReference type="eggNOG" id="KOG0465">
    <property type="taxonomic scope" value="Eukaryota"/>
</dbReference>
<dbReference type="HOGENOM" id="CLU_002794_4_1_1"/>
<dbReference type="InParanoid" id="B8MR69"/>
<dbReference type="OrthoDB" id="198619at2759"/>
<dbReference type="Proteomes" id="UP000001745">
    <property type="component" value="Unassembled WGS sequence"/>
</dbReference>
<dbReference type="GO" id="GO:0005739">
    <property type="term" value="C:mitochondrion"/>
    <property type="evidence" value="ECO:0007669"/>
    <property type="project" value="UniProtKB-SubCell"/>
</dbReference>
<dbReference type="GO" id="GO:0005525">
    <property type="term" value="F:GTP binding"/>
    <property type="evidence" value="ECO:0007669"/>
    <property type="project" value="UniProtKB-UniRule"/>
</dbReference>
<dbReference type="GO" id="GO:0003924">
    <property type="term" value="F:GTPase activity"/>
    <property type="evidence" value="ECO:0007669"/>
    <property type="project" value="UniProtKB-UniRule"/>
</dbReference>
<dbReference type="GO" id="GO:0032543">
    <property type="term" value="P:mitochondrial translation"/>
    <property type="evidence" value="ECO:0007669"/>
    <property type="project" value="UniProtKB-UniRule"/>
</dbReference>
<dbReference type="GO" id="GO:0032790">
    <property type="term" value="P:ribosome disassembly"/>
    <property type="evidence" value="ECO:0007669"/>
    <property type="project" value="UniProtKB-UniRule"/>
</dbReference>
<dbReference type="CDD" id="cd01886">
    <property type="entry name" value="EF-G"/>
    <property type="match status" value="1"/>
</dbReference>
<dbReference type="CDD" id="cd16262">
    <property type="entry name" value="EFG_III"/>
    <property type="match status" value="1"/>
</dbReference>
<dbReference type="CDD" id="cd03713">
    <property type="entry name" value="EFG_mtEFG_C"/>
    <property type="match status" value="1"/>
</dbReference>
<dbReference type="FunFam" id="2.40.30.10:FF:000106">
    <property type="entry name" value="Ribosome-releasing factor 2, mitochondrial"/>
    <property type="match status" value="1"/>
</dbReference>
<dbReference type="FunFam" id="3.30.70.870:FF:000007">
    <property type="entry name" value="Ribosome-releasing factor 2, mitochondrial"/>
    <property type="match status" value="1"/>
</dbReference>
<dbReference type="FunFam" id="3.40.50.300:FF:001636">
    <property type="entry name" value="Ribosome-releasing factor 2, mitochondrial"/>
    <property type="match status" value="1"/>
</dbReference>
<dbReference type="Gene3D" id="3.30.230.10">
    <property type="match status" value="1"/>
</dbReference>
<dbReference type="Gene3D" id="3.30.70.240">
    <property type="match status" value="1"/>
</dbReference>
<dbReference type="Gene3D" id="3.30.70.870">
    <property type="entry name" value="Elongation Factor G (Translational Gtpase), domain 3"/>
    <property type="match status" value="1"/>
</dbReference>
<dbReference type="Gene3D" id="3.40.50.300">
    <property type="entry name" value="P-loop containing nucleotide triphosphate hydrolases"/>
    <property type="match status" value="1"/>
</dbReference>
<dbReference type="Gene3D" id="2.40.30.10">
    <property type="entry name" value="Translation factors"/>
    <property type="match status" value="1"/>
</dbReference>
<dbReference type="HAMAP" id="MF_03059">
    <property type="entry name" value="mEF_G_2"/>
    <property type="match status" value="1"/>
</dbReference>
<dbReference type="InterPro" id="IPR053905">
    <property type="entry name" value="EF-G-like_DII"/>
</dbReference>
<dbReference type="InterPro" id="IPR030851">
    <property type="entry name" value="EFG2"/>
</dbReference>
<dbReference type="InterPro" id="IPR041095">
    <property type="entry name" value="EFG_II"/>
</dbReference>
<dbReference type="InterPro" id="IPR009022">
    <property type="entry name" value="EFG_III"/>
</dbReference>
<dbReference type="InterPro" id="IPR035647">
    <property type="entry name" value="EFG_III/V"/>
</dbReference>
<dbReference type="InterPro" id="IPR035649">
    <property type="entry name" value="EFG_V"/>
</dbReference>
<dbReference type="InterPro" id="IPR000640">
    <property type="entry name" value="EFG_V-like"/>
</dbReference>
<dbReference type="InterPro" id="IPR031157">
    <property type="entry name" value="G_TR_CS"/>
</dbReference>
<dbReference type="InterPro" id="IPR027417">
    <property type="entry name" value="P-loop_NTPase"/>
</dbReference>
<dbReference type="InterPro" id="IPR020568">
    <property type="entry name" value="Ribosomal_Su5_D2-typ_SF"/>
</dbReference>
<dbReference type="InterPro" id="IPR014721">
    <property type="entry name" value="Ribsml_uS5_D2-typ_fold_subgr"/>
</dbReference>
<dbReference type="InterPro" id="IPR005225">
    <property type="entry name" value="Small_GTP-bd"/>
</dbReference>
<dbReference type="InterPro" id="IPR000795">
    <property type="entry name" value="T_Tr_GTP-bd_dom"/>
</dbReference>
<dbReference type="InterPro" id="IPR009000">
    <property type="entry name" value="Transl_B-barrel_sf"/>
</dbReference>
<dbReference type="NCBIfam" id="TIGR00231">
    <property type="entry name" value="small_GTP"/>
    <property type="match status" value="1"/>
</dbReference>
<dbReference type="PANTHER" id="PTHR43261:SF1">
    <property type="entry name" value="RIBOSOME-RELEASING FACTOR 2, MITOCHONDRIAL"/>
    <property type="match status" value="1"/>
</dbReference>
<dbReference type="PANTHER" id="PTHR43261">
    <property type="entry name" value="TRANSLATION ELONGATION FACTOR G-RELATED"/>
    <property type="match status" value="1"/>
</dbReference>
<dbReference type="Pfam" id="PF22042">
    <property type="entry name" value="EF-G_D2"/>
    <property type="match status" value="1"/>
</dbReference>
<dbReference type="Pfam" id="PF00679">
    <property type="entry name" value="EFG_C"/>
    <property type="match status" value="1"/>
</dbReference>
<dbReference type="Pfam" id="PF14492">
    <property type="entry name" value="EFG_III"/>
    <property type="match status" value="1"/>
</dbReference>
<dbReference type="Pfam" id="PF00009">
    <property type="entry name" value="GTP_EFTU"/>
    <property type="match status" value="1"/>
</dbReference>
<dbReference type="PRINTS" id="PR00315">
    <property type="entry name" value="ELONGATNFCT"/>
</dbReference>
<dbReference type="SMART" id="SM00838">
    <property type="entry name" value="EFG_C"/>
    <property type="match status" value="1"/>
</dbReference>
<dbReference type="SUPFAM" id="SSF54980">
    <property type="entry name" value="EF-G C-terminal domain-like"/>
    <property type="match status" value="2"/>
</dbReference>
<dbReference type="SUPFAM" id="SSF52540">
    <property type="entry name" value="P-loop containing nucleoside triphosphate hydrolases"/>
    <property type="match status" value="1"/>
</dbReference>
<dbReference type="SUPFAM" id="SSF54211">
    <property type="entry name" value="Ribosomal protein S5 domain 2-like"/>
    <property type="match status" value="1"/>
</dbReference>
<dbReference type="SUPFAM" id="SSF50447">
    <property type="entry name" value="Translation proteins"/>
    <property type="match status" value="1"/>
</dbReference>
<dbReference type="PROSITE" id="PS00301">
    <property type="entry name" value="G_TR_1"/>
    <property type="match status" value="1"/>
</dbReference>
<dbReference type="PROSITE" id="PS51722">
    <property type="entry name" value="G_TR_2"/>
    <property type="match status" value="1"/>
</dbReference>
<name>RRF2M_TALSN</name>
<keyword id="KW-0342">GTP-binding</keyword>
<keyword id="KW-0496">Mitochondrion</keyword>
<keyword id="KW-0547">Nucleotide-binding</keyword>
<keyword id="KW-0648">Protein biosynthesis</keyword>
<keyword id="KW-1185">Reference proteome</keyword>
<gene>
    <name type="primary">mef2</name>
    <name type="ORF">TSTA_054740</name>
</gene>
<reference key="1">
    <citation type="journal article" date="2015" name="Genome Announc.">
        <title>Genome sequence of the AIDS-associated pathogen Penicillium marneffei (ATCC18224) and its near taxonomic relative Talaromyces stipitatus (ATCC10500).</title>
        <authorList>
            <person name="Nierman W.C."/>
            <person name="Fedorova-Abrams N.D."/>
            <person name="Andrianopoulos A."/>
        </authorList>
    </citation>
    <scope>NUCLEOTIDE SEQUENCE [LARGE SCALE GENOMIC DNA]</scope>
    <source>
        <strain>ATCC 10500 / CBS 375.48 / QM 6759 / NRRL 1006</strain>
    </source>
</reference>
<sequence length="931" mass="100817">MVSAPLLGWAAIRPIPVSRLKTCKYASNSLQSYNGIVASYLRLHYYRSLSSSAVLAEAIVHLEKTRNIGIIAHIDAGKTTTTERMLYYSGFTRRIGDVDDGSTVTDFLPAERARGITIQSAAITFHWPPLTGDGTSSSPSLEDLEAQNLPRSRASHTVNLIDTPGHADFTFEVLRSLRILDGAVCILDGVAGVEAQTEKVWHQASVYQIPRIVYVNKLDRDGAAFGRTVREVGSRLQGWPAVCQIPWFEGSNGRFTGIADVVSLQGLLWKEGGDGKSVKVFDLNGLENEDKSLAEELKRARVALVELLSEHDEDMVESFFEHEEDHLTVPSITILKSLRKCLLGPETQKIIPVFAGSSFRNMGVQPLLDAVNNLLPGPSESHDPEISLGSDKTSLGNLLSGELALQQDPKTASIEKSKQKKKAVVTRTSVDIKSLTANLESCALAFKVVSDAKRGVLVYVRVYSGSLNRNCHLYNTNLHVTERAPRLFKMYANDAVEVDSIPAGHIGVVVGLKYARTGDTLISCTGSKSVPPEPLNTLQLRPIDVPPPVFFASIEPHSLSEEKNMQEALALLLREDPSLHVTIDEDSGQTLLSGMGELHLEIARDRLVNDFKAKASMGRIEIGYRECVLDQSNPVTKIFDREVAGRKGKAGCTAVVEPYGQELESDGNDTSGSDDIIFTETVDGNKIIISAPGVNITTDKKGKEESTSLPPQLDLNSFRTSLYNGALSALARGPQFAFPMHNTKVTLTCNAAEHLFGSESSASALSAAARLATQGALRNLTTTAASTGTGMMEPVMNVIISVDEASLGAVVHDISSARGGHIVSLDEEMPISTSLSQSPESQDQPVAVDINKIYAPPDPFETPSVAGGLPIQAPANQPRTITAKVPLKEMVGYLKHLRSLSAGRGTFVMHVDRFERMSAQRQKAVLAELNR</sequence>
<organism>
    <name type="scientific">Talaromyces stipitatus (strain ATCC 10500 / CBS 375.48 / QM 6759 / NRRL 1006)</name>
    <name type="common">Penicillium stipitatum</name>
    <dbReference type="NCBI Taxonomy" id="441959"/>
    <lineage>
        <taxon>Eukaryota</taxon>
        <taxon>Fungi</taxon>
        <taxon>Dikarya</taxon>
        <taxon>Ascomycota</taxon>
        <taxon>Pezizomycotina</taxon>
        <taxon>Eurotiomycetes</taxon>
        <taxon>Eurotiomycetidae</taxon>
        <taxon>Eurotiales</taxon>
        <taxon>Trichocomaceae</taxon>
        <taxon>Talaromyces</taxon>
        <taxon>Talaromyces sect. Talaromyces</taxon>
    </lineage>
</organism>
<proteinExistence type="inferred from homology"/>